<feature type="chain" id="PRO_0000139806" description="Nitrogen fixation nifHD region glnB-like protein 1">
    <location>
        <begin position="1"/>
        <end position="105"/>
    </location>
</feature>
<organism>
    <name type="scientific">Methanococcus maripaludis</name>
    <name type="common">Methanococcus deltae</name>
    <dbReference type="NCBI Taxonomy" id="39152"/>
    <lineage>
        <taxon>Archaea</taxon>
        <taxon>Methanobacteriati</taxon>
        <taxon>Methanobacteriota</taxon>
        <taxon>Methanomada group</taxon>
        <taxon>Methanococci</taxon>
        <taxon>Methanococcales</taxon>
        <taxon>Methanococcaceae</taxon>
        <taxon>Methanococcus</taxon>
    </lineage>
</organism>
<reference key="1">
    <citation type="journal article" date="1997" name="J. Bacteriol.">
        <title>Nitrogenase phylogeny and the molybdenum dependence of nitrogen fixation in Methanococcus maripaludis.</title>
        <authorList>
            <person name="Kessler P.S."/>
            <person name="McLarnan J."/>
            <person name="Leigh J.A."/>
        </authorList>
    </citation>
    <scope>NUCLEOTIDE SEQUENCE [GENOMIC DNA]</scope>
    <source>
        <strain>ATCC 43000 / DSM 2067 / JCM 10722 / JJ</strain>
    </source>
</reference>
<gene>
    <name type="primary">glnBI</name>
    <name type="synonym">nifI1</name>
</gene>
<protein>
    <recommendedName>
        <fullName>Nitrogen fixation nifHD region glnB-like protein 1</fullName>
    </recommendedName>
</protein>
<sequence length="105" mass="11596">MKMIRAVVRPSKAEEVVDALAESGCLALTKMDVIGRGKQKGIKIDQIYYDELPKTMLMLVVEDDTAENVIELITKTAYTGSFGYGKIFVSPVDEAYTVRTRSCGL</sequence>
<keyword id="KW-0535">Nitrogen fixation</keyword>
<keyword id="KW-0804">Transcription</keyword>
<keyword id="KW-0805">Transcription regulation</keyword>
<name>GLNB1_METMI</name>
<comment type="function">
    <text>Could be involved in the regulation of nitrogen fixation.</text>
</comment>
<comment type="interaction">
    <interactant intactId="EBI-15587555">
        <id>P0CW44</id>
    </interactant>
    <interactant intactId="EBI-15587572">
        <id>P0CW46</id>
        <label>glnBII</label>
    </interactant>
    <organismsDiffer>false</organismsDiffer>
    <experiments>4</experiments>
</comment>
<comment type="similarity">
    <text evidence="1">Belongs to the P(II) protein family.</text>
</comment>
<accession>P0CW44</accession>
<accession>P71524</accession>
<dbReference type="EMBL" id="U75887">
    <property type="protein sequence ID" value="AAC45513.1"/>
    <property type="molecule type" value="Genomic_DNA"/>
</dbReference>
<dbReference type="PIR" id="T10091">
    <property type="entry name" value="T10091"/>
</dbReference>
<dbReference type="SMR" id="P0CW44"/>
<dbReference type="DIP" id="DIP-61199N"/>
<dbReference type="IntAct" id="P0CW44">
    <property type="interactions" value="3"/>
</dbReference>
<dbReference type="GO" id="GO:0005829">
    <property type="term" value="C:cytosol"/>
    <property type="evidence" value="ECO:0007669"/>
    <property type="project" value="TreeGrafter"/>
</dbReference>
<dbReference type="GO" id="GO:0005524">
    <property type="term" value="F:ATP binding"/>
    <property type="evidence" value="ECO:0007669"/>
    <property type="project" value="TreeGrafter"/>
</dbReference>
<dbReference type="GO" id="GO:0030234">
    <property type="term" value="F:enzyme regulator activity"/>
    <property type="evidence" value="ECO:0007669"/>
    <property type="project" value="InterPro"/>
</dbReference>
<dbReference type="GO" id="GO:0009399">
    <property type="term" value="P:nitrogen fixation"/>
    <property type="evidence" value="ECO:0007669"/>
    <property type="project" value="UniProtKB-KW"/>
</dbReference>
<dbReference type="GO" id="GO:0006808">
    <property type="term" value="P:regulation of nitrogen utilization"/>
    <property type="evidence" value="ECO:0007669"/>
    <property type="project" value="InterPro"/>
</dbReference>
<dbReference type="Gene3D" id="3.30.70.120">
    <property type="match status" value="1"/>
</dbReference>
<dbReference type="InterPro" id="IPR002187">
    <property type="entry name" value="N-reg_PII"/>
</dbReference>
<dbReference type="InterPro" id="IPR011322">
    <property type="entry name" value="N-reg_PII-like_a/b"/>
</dbReference>
<dbReference type="InterPro" id="IPR015867">
    <property type="entry name" value="N-reg_PII/ATP_PRibTrfase_C"/>
</dbReference>
<dbReference type="InterPro" id="IPR017918">
    <property type="entry name" value="N-reg_PII_CS"/>
</dbReference>
<dbReference type="PANTHER" id="PTHR30115">
    <property type="entry name" value="NITROGEN REGULATORY PROTEIN P-II"/>
    <property type="match status" value="1"/>
</dbReference>
<dbReference type="PANTHER" id="PTHR30115:SF13">
    <property type="entry name" value="PII-LIKE PROTEIN GLNBI"/>
    <property type="match status" value="1"/>
</dbReference>
<dbReference type="Pfam" id="PF00543">
    <property type="entry name" value="P-II"/>
    <property type="match status" value="1"/>
</dbReference>
<dbReference type="PRINTS" id="PR00340">
    <property type="entry name" value="PIIGLNB"/>
</dbReference>
<dbReference type="SMART" id="SM00938">
    <property type="entry name" value="P-II"/>
    <property type="match status" value="1"/>
</dbReference>
<dbReference type="SUPFAM" id="SSF54913">
    <property type="entry name" value="GlnB-like"/>
    <property type="match status" value="1"/>
</dbReference>
<dbReference type="PROSITE" id="PS00638">
    <property type="entry name" value="PII_GLNB_CTER"/>
    <property type="match status" value="1"/>
</dbReference>
<dbReference type="PROSITE" id="PS51343">
    <property type="entry name" value="PII_GLNB_DOM"/>
    <property type="match status" value="1"/>
</dbReference>
<proteinExistence type="evidence at protein level"/>
<evidence type="ECO:0000255" key="1">
    <source>
        <dbReference type="PROSITE-ProRule" id="PRU00675"/>
    </source>
</evidence>